<comment type="function">
    <text evidence="1">Variant histone H2A which replaces conventional H2A in a subset of nucleosomes. Nucleosomes wrap and compact DNA into chromatin, limiting DNA accessibility to the cellular machineries which require DNA as a template. Histones thereby play a central role in transcription regulation, DNA repair, DNA replication and chromosomal stability. DNA accessibility is regulated via a complex set of post-translational modifications of histones, also called histone code, and nucleosome remodeling. May be involved in the formation of constitutive heterochromatin. May be required for chromosome segregation during cell division (By similarity).</text>
</comment>
<comment type="subunit">
    <text evidence="1">The nucleosome is a histone octamer containing two molecules each of H2A, H2B, H3 and H4 assembled in one H3-H4 heterotetramer and two H2A-H2B heterodimers. The octamer wraps approximately 147 bp of DNA. H2A or its variant H2AZ2 forms a heterodimer with H2B (By similarity).</text>
</comment>
<comment type="subcellular location">
    <subcellularLocation>
        <location evidence="1">Nucleus</location>
    </subcellularLocation>
    <subcellularLocation>
        <location evidence="1">Chromosome</location>
    </subcellularLocation>
</comment>
<comment type="PTM">
    <text evidence="1">Monoubiquitination of Lys-122 gives a specific tag for epigenetic transcriptional repression.</text>
</comment>
<comment type="PTM">
    <text evidence="1">Acetylated on Lys-5, Lys-8 and Lys-12 during interphase. Acetylation disappears at mitosis (By similarity).</text>
</comment>
<comment type="similarity">
    <text evidence="6">Belongs to the histone H2A family.</text>
</comment>
<keyword id="KW-0007">Acetylation</keyword>
<keyword id="KW-0158">Chromosome</keyword>
<keyword id="KW-0238">DNA-binding</keyword>
<keyword id="KW-0544">Nucleosome core</keyword>
<keyword id="KW-0539">Nucleus</keyword>
<keyword id="KW-1185">Reference proteome</keyword>
<keyword id="KW-0832">Ubl conjugation</keyword>
<name>H2AV_BOVIN</name>
<sequence length="128" mass="13509">MAGGKAGKDSGKAKAKAVSRSQRAGLQFPVGRIHRHLKTRTTSHGRVGATAAVYSAAILEYLTAEVLELAGNASKDLKVKRITPRHLQLAIRGDEELDSLIKATIAGGGVIPHIHKSLIGKKGQQKTA</sequence>
<reference key="1">
    <citation type="submission" date="2005-11" db="EMBL/GenBank/DDBJ databases">
        <authorList>
            <consortium name="NIH - Mammalian Gene Collection (MGC) project"/>
        </authorList>
    </citation>
    <scope>NUCLEOTIDE SEQUENCE [LARGE SCALE MRNA]</scope>
    <source>
        <strain>Crossbred X Angus</strain>
        <tissue>Liver</tissue>
    </source>
</reference>
<gene>
    <name evidence="4" type="primary">H2AZ2</name>
    <name type="synonym">H2AV</name>
</gene>
<protein>
    <recommendedName>
        <fullName>Histone H2A.V</fullName>
    </recommendedName>
    <alternativeName>
        <fullName>H2A.F/Z</fullName>
    </alternativeName>
</protein>
<feature type="initiator methionine" description="Removed" evidence="6">
    <location>
        <position position="1"/>
    </location>
</feature>
<feature type="chain" id="PRO_0000239067" description="Histone H2A.V">
    <location>
        <begin position="2"/>
        <end position="128"/>
    </location>
</feature>
<feature type="region of interest" description="Disordered" evidence="5">
    <location>
        <begin position="1"/>
        <end position="23"/>
    </location>
</feature>
<feature type="compositionally biased region" description="Basic and acidic residues" evidence="5">
    <location>
        <begin position="1"/>
        <end position="12"/>
    </location>
</feature>
<feature type="modified residue" description="N6-acetyllysine" evidence="3">
    <location>
        <position position="5"/>
    </location>
</feature>
<feature type="modified residue" description="N6-acetyllysine" evidence="3">
    <location>
        <position position="8"/>
    </location>
</feature>
<feature type="modified residue" description="N6-acetyllysine" evidence="3">
    <location>
        <position position="12"/>
    </location>
</feature>
<feature type="modified residue" description="N6-lactoyllysine; alternate" evidence="2">
    <location>
        <position position="12"/>
    </location>
</feature>
<feature type="modified residue" description="N6-lactoyllysine; alternate" evidence="2">
    <location>
        <position position="14"/>
    </location>
</feature>
<feature type="modified residue" description="N6-lactoyllysine" evidence="2">
    <location>
        <position position="116"/>
    </location>
</feature>
<dbReference type="EMBL" id="BC109673">
    <property type="protein sequence ID" value="AAI09674.1"/>
    <property type="molecule type" value="mRNA"/>
</dbReference>
<dbReference type="RefSeq" id="NP_001033286.1">
    <property type="nucleotide sequence ID" value="NM_001038197.1"/>
</dbReference>
<dbReference type="SMR" id="Q32LA7"/>
<dbReference type="FunCoup" id="Q32LA7">
    <property type="interactions" value="3140"/>
</dbReference>
<dbReference type="STRING" id="9913.ENSBTAP00000022576"/>
<dbReference type="PaxDb" id="9913-ENSBTAP00000022576"/>
<dbReference type="Ensembl" id="ENSBTAT00000022576.4">
    <property type="protein sequence ID" value="ENSBTAP00000022576.3"/>
    <property type="gene ID" value="ENSBTAG00000016975.5"/>
</dbReference>
<dbReference type="GeneID" id="613618"/>
<dbReference type="KEGG" id="bta:613618"/>
<dbReference type="CTD" id="94239"/>
<dbReference type="VEuPathDB" id="HostDB:ENSBTAG00000016975"/>
<dbReference type="VGNC" id="VGNC:83607">
    <property type="gene designation" value="H2AZ2"/>
</dbReference>
<dbReference type="eggNOG" id="KOG1757">
    <property type="taxonomic scope" value="Eukaryota"/>
</dbReference>
<dbReference type="GeneTree" id="ENSGT00900000140979"/>
<dbReference type="HOGENOM" id="CLU_062828_2_2_1"/>
<dbReference type="InParanoid" id="Q32LA7"/>
<dbReference type="OMA" id="MNKKGAP"/>
<dbReference type="OrthoDB" id="9709081at2759"/>
<dbReference type="TreeFam" id="TF354232"/>
<dbReference type="Reactome" id="R-BTA-110330">
    <property type="pathway name" value="Recognition and association of DNA glycosylase with site containing an affected purine"/>
</dbReference>
<dbReference type="Reactome" id="R-BTA-110331">
    <property type="pathway name" value="Cleavage of the damaged purine"/>
</dbReference>
<dbReference type="Reactome" id="R-BTA-171306">
    <property type="pathway name" value="Packaging Of Telomere Ends"/>
</dbReference>
<dbReference type="Reactome" id="R-BTA-201722">
    <property type="pathway name" value="Formation of the beta-catenin:TCF transactivating complex"/>
</dbReference>
<dbReference type="Reactome" id="R-BTA-212300">
    <property type="pathway name" value="PRC2 methylates histones and DNA"/>
</dbReference>
<dbReference type="Reactome" id="R-BTA-2299718">
    <property type="pathway name" value="Condensation of Prophase Chromosomes"/>
</dbReference>
<dbReference type="Reactome" id="R-BTA-2559580">
    <property type="pathway name" value="Oxidative Stress Induced Senescence"/>
</dbReference>
<dbReference type="Reactome" id="R-BTA-2559582">
    <property type="pathway name" value="Senescence-Associated Secretory Phenotype (SASP)"/>
</dbReference>
<dbReference type="Reactome" id="R-BTA-2559586">
    <property type="pathway name" value="DNA Damage/Telomere Stress Induced Senescence"/>
</dbReference>
<dbReference type="Reactome" id="R-BTA-3214858">
    <property type="pathway name" value="RMTs methylate histone arginines"/>
</dbReference>
<dbReference type="Reactome" id="R-BTA-427359">
    <property type="pathway name" value="SIRT1 negatively regulates rRNA expression"/>
</dbReference>
<dbReference type="Reactome" id="R-BTA-427413">
    <property type="pathway name" value="NoRC negatively regulates rRNA expression"/>
</dbReference>
<dbReference type="Reactome" id="R-BTA-5250924">
    <property type="pathway name" value="B-WICH complex positively regulates rRNA expression"/>
</dbReference>
<dbReference type="Reactome" id="R-BTA-5578749">
    <property type="pathway name" value="Transcriptional regulation by small RNAs"/>
</dbReference>
<dbReference type="Reactome" id="R-BTA-5625886">
    <property type="pathway name" value="Activated PKN1 stimulates transcription of AR (androgen receptor) regulated genes KLK2 and KLK3"/>
</dbReference>
<dbReference type="Reactome" id="R-BTA-606279">
    <property type="pathway name" value="Deposition of new CENPA-containing nucleosomes at the centromere"/>
</dbReference>
<dbReference type="Reactome" id="R-BTA-68616">
    <property type="pathway name" value="Assembly of the ORC complex at the origin of replication"/>
</dbReference>
<dbReference type="Reactome" id="R-BTA-73728">
    <property type="pathway name" value="RNA Polymerase I Promoter Opening"/>
</dbReference>
<dbReference type="Reactome" id="R-BTA-73772">
    <property type="pathway name" value="RNA Polymerase I Promoter Escape"/>
</dbReference>
<dbReference type="Reactome" id="R-BTA-8936459">
    <property type="pathway name" value="RUNX1 regulates genes involved in megakaryocyte differentiation and platelet function"/>
</dbReference>
<dbReference type="Reactome" id="R-BTA-9018519">
    <property type="pathway name" value="Estrogen-dependent gene expression"/>
</dbReference>
<dbReference type="Reactome" id="R-BTA-9670095">
    <property type="pathway name" value="Inhibition of DNA recombination at telomere"/>
</dbReference>
<dbReference type="Reactome" id="R-BTA-9841922">
    <property type="pathway name" value="MLL4 and MLL3 complexes regulate expression of PPARG target genes in adipogenesis and hepatic steatosis"/>
</dbReference>
<dbReference type="Reactome" id="R-BTA-9843940">
    <property type="pathway name" value="Regulation of endogenous retroelements by KRAB-ZFP proteins"/>
</dbReference>
<dbReference type="Reactome" id="R-BTA-9843970">
    <property type="pathway name" value="Regulation of endogenous retroelements by the Human Silencing Hub (HUSH) complex"/>
</dbReference>
<dbReference type="Proteomes" id="UP000009136">
    <property type="component" value="Chromosome 4"/>
</dbReference>
<dbReference type="Bgee" id="ENSBTAG00000016975">
    <property type="expression patterns" value="Expressed in thymus and 104 other cell types or tissues"/>
</dbReference>
<dbReference type="GO" id="GO:0000786">
    <property type="term" value="C:nucleosome"/>
    <property type="evidence" value="ECO:0000318"/>
    <property type="project" value="GO_Central"/>
</dbReference>
<dbReference type="GO" id="GO:0005634">
    <property type="term" value="C:nucleus"/>
    <property type="evidence" value="ECO:0000318"/>
    <property type="project" value="GO_Central"/>
</dbReference>
<dbReference type="GO" id="GO:0003677">
    <property type="term" value="F:DNA binding"/>
    <property type="evidence" value="ECO:0007669"/>
    <property type="project" value="UniProtKB-KW"/>
</dbReference>
<dbReference type="GO" id="GO:0046982">
    <property type="term" value="F:protein heterodimerization activity"/>
    <property type="evidence" value="ECO:0007669"/>
    <property type="project" value="InterPro"/>
</dbReference>
<dbReference type="GO" id="GO:0030527">
    <property type="term" value="F:structural constituent of chromatin"/>
    <property type="evidence" value="ECO:0000318"/>
    <property type="project" value="GO_Central"/>
</dbReference>
<dbReference type="GO" id="GO:0031507">
    <property type="term" value="P:heterochromatin formation"/>
    <property type="evidence" value="ECO:0000318"/>
    <property type="project" value="GO_Central"/>
</dbReference>
<dbReference type="CDD" id="cd00074">
    <property type="entry name" value="HFD_H2A"/>
    <property type="match status" value="1"/>
</dbReference>
<dbReference type="FunFam" id="1.10.20.10:FF:000005">
    <property type="entry name" value="Histone H2A"/>
    <property type="match status" value="1"/>
</dbReference>
<dbReference type="Gene3D" id="1.10.20.10">
    <property type="entry name" value="Histone, subunit A"/>
    <property type="match status" value="1"/>
</dbReference>
<dbReference type="InterPro" id="IPR009072">
    <property type="entry name" value="Histone-fold"/>
</dbReference>
<dbReference type="InterPro" id="IPR002119">
    <property type="entry name" value="Histone_H2A"/>
</dbReference>
<dbReference type="InterPro" id="IPR007125">
    <property type="entry name" value="Histone_H2A/H2B/H3"/>
</dbReference>
<dbReference type="InterPro" id="IPR032454">
    <property type="entry name" value="Histone_H2A_C"/>
</dbReference>
<dbReference type="InterPro" id="IPR032458">
    <property type="entry name" value="Histone_H2A_CS"/>
</dbReference>
<dbReference type="PANTHER" id="PTHR23430">
    <property type="entry name" value="HISTONE H2A"/>
    <property type="match status" value="1"/>
</dbReference>
<dbReference type="Pfam" id="PF00125">
    <property type="entry name" value="Histone"/>
    <property type="match status" value="1"/>
</dbReference>
<dbReference type="Pfam" id="PF16211">
    <property type="entry name" value="Histone_H2A_C"/>
    <property type="match status" value="1"/>
</dbReference>
<dbReference type="PRINTS" id="PR00620">
    <property type="entry name" value="HISTONEH2A"/>
</dbReference>
<dbReference type="SMART" id="SM00414">
    <property type="entry name" value="H2A"/>
    <property type="match status" value="1"/>
</dbReference>
<dbReference type="SUPFAM" id="SSF47113">
    <property type="entry name" value="Histone-fold"/>
    <property type="match status" value="1"/>
</dbReference>
<dbReference type="PROSITE" id="PS00046">
    <property type="entry name" value="HISTONE_H2A"/>
    <property type="match status" value="1"/>
</dbReference>
<accession>Q32LA7</accession>
<organism>
    <name type="scientific">Bos taurus</name>
    <name type="common">Bovine</name>
    <dbReference type="NCBI Taxonomy" id="9913"/>
    <lineage>
        <taxon>Eukaryota</taxon>
        <taxon>Metazoa</taxon>
        <taxon>Chordata</taxon>
        <taxon>Craniata</taxon>
        <taxon>Vertebrata</taxon>
        <taxon>Euteleostomi</taxon>
        <taxon>Mammalia</taxon>
        <taxon>Eutheria</taxon>
        <taxon>Laurasiatheria</taxon>
        <taxon>Artiodactyla</taxon>
        <taxon>Ruminantia</taxon>
        <taxon>Pecora</taxon>
        <taxon>Bovidae</taxon>
        <taxon>Bovinae</taxon>
        <taxon>Bos</taxon>
    </lineage>
</organism>
<proteinExistence type="evidence at transcript level"/>
<evidence type="ECO:0000250" key="1"/>
<evidence type="ECO:0000250" key="2">
    <source>
        <dbReference type="UniProtKB" id="P0C0S5"/>
    </source>
</evidence>
<evidence type="ECO:0000250" key="3">
    <source>
        <dbReference type="UniProtKB" id="Q3THW5"/>
    </source>
</evidence>
<evidence type="ECO:0000250" key="4">
    <source>
        <dbReference type="UniProtKB" id="Q71UI9"/>
    </source>
</evidence>
<evidence type="ECO:0000256" key="5">
    <source>
        <dbReference type="SAM" id="MobiDB-lite"/>
    </source>
</evidence>
<evidence type="ECO:0000305" key="6"/>